<comment type="function">
    <text evidence="1 2">Involved in plant growth, and promotes salt (e.g. NaCl and LiCl) and osmotic tolerance, probably via coenzyme A (CoA) and endogenous proline accumulation (Ref.3). Catalyzes the decarboxylation of 4'-phosphopantothenoylcysteine to 4'-phosphopantetheine, a key step in coenzyme A biosynthesis (By similarity). Favors seed germination and helps the onset of flowering (Ref.3). Required for roots development (Ref.3).</text>
</comment>
<comment type="catalytic activity">
    <reaction evidence="1">
        <text>N-[(R)-4-phosphopantothenoyl]-L-cysteine + H(+) = (R)-4'-phosphopantetheine + CO2</text>
        <dbReference type="Rhea" id="RHEA:16793"/>
        <dbReference type="ChEBI" id="CHEBI:15378"/>
        <dbReference type="ChEBI" id="CHEBI:16526"/>
        <dbReference type="ChEBI" id="CHEBI:59458"/>
        <dbReference type="ChEBI" id="CHEBI:61723"/>
        <dbReference type="EC" id="4.1.1.36"/>
    </reaction>
    <physiologicalReaction direction="left-to-right" evidence="1">
        <dbReference type="Rhea" id="RHEA:16794"/>
    </physiologicalReaction>
</comment>
<comment type="cofactor">
    <cofactor evidence="1">
        <name>FMN</name>
        <dbReference type="ChEBI" id="CHEBI:58210"/>
    </cofactor>
    <text evidence="1">Binds 1 FMN per subunit.</text>
</comment>
<comment type="pathway">
    <text evidence="1">Cofactor biosynthesis; coenzyme A biosynthesis; CoA from (R)-pantothenate: step 3/5.</text>
</comment>
<comment type="subunit">
    <text evidence="1 3">Homotrimer (By similarity). Interacts with CYP2 in the plasma membrane and nucleus (Ref.4).</text>
</comment>
<comment type="subcellular location">
    <subcellularLocation>
        <location evidence="3">Cell membrane</location>
    </subcellularLocation>
    <subcellularLocation>
        <location evidence="3">Nucleus</location>
    </subcellularLocation>
</comment>
<comment type="tissue specificity">
    <text evidence="2">Mainly expressed in roots, to a lower extent in stems, and at low levels in leaves and seeds.</text>
</comment>
<comment type="developmental stage">
    <text evidence="2">Gradual accumulation in flowering plants with a transient peak in seeds 65 days after flowering.</text>
</comment>
<comment type="induction">
    <text evidence="2">Induced by salt (NaCl), lithium chloride (LiCl), sorbitol, cold and abscisic acid (ABA).</text>
</comment>
<comment type="miscellaneous">
    <text evidence="7">The cv. Suxie No.1 (SX1) is more tolerant to salt stress than the cv. Tianlong No.1 (TL1).</text>
</comment>
<comment type="similarity">
    <text evidence="6">Belongs to the HFCD (homooligomeric flavin containing Cys decarboxylase) superfamily.</text>
</comment>
<proteinExistence type="evidence at protein level"/>
<gene>
    <name evidence="4 5" type="primary">HAL3B</name>
    <name evidence="9" type="ordered locus">Glyma07g082800</name>
</gene>
<organism>
    <name type="scientific">Glycine max</name>
    <name type="common">Soybean</name>
    <name type="synonym">Glycine hispida</name>
    <dbReference type="NCBI Taxonomy" id="3847"/>
    <lineage>
        <taxon>Eukaryota</taxon>
        <taxon>Viridiplantae</taxon>
        <taxon>Streptophyta</taxon>
        <taxon>Embryophyta</taxon>
        <taxon>Tracheophyta</taxon>
        <taxon>Spermatophyta</taxon>
        <taxon>Magnoliopsida</taxon>
        <taxon>eudicotyledons</taxon>
        <taxon>Gunneridae</taxon>
        <taxon>Pentapetalae</taxon>
        <taxon>rosids</taxon>
        <taxon>fabids</taxon>
        <taxon>Fabales</taxon>
        <taxon>Fabaceae</taxon>
        <taxon>Papilionoideae</taxon>
        <taxon>50 kb inversion clade</taxon>
        <taxon>NPAAA clade</taxon>
        <taxon>indigoferoid/millettioid clade</taxon>
        <taxon>Phaseoleae</taxon>
        <taxon>Glycine</taxon>
        <taxon>Glycine subgen. Soja</taxon>
    </lineage>
</organism>
<dbReference type="EC" id="4.1.1.36" evidence="1"/>
<dbReference type="EMBL" id="BT094392">
    <property type="protein sequence ID" value="ACU18711.1"/>
    <property type="molecule type" value="mRNA"/>
</dbReference>
<dbReference type="EMBL" id="CM000840">
    <property type="protein sequence ID" value="KRH48322.1"/>
    <property type="molecule type" value="Genomic_DNA"/>
</dbReference>
<dbReference type="EMBL" id="CM000840">
    <property type="protein sequence ID" value="KRH48323.1"/>
    <property type="molecule type" value="Genomic_DNA"/>
</dbReference>
<dbReference type="EMBL" id="CM000840">
    <property type="protein sequence ID" value="KRH48324.1"/>
    <property type="molecule type" value="Genomic_DNA"/>
</dbReference>
<dbReference type="RefSeq" id="XP_014632819.1">
    <property type="nucleotide sequence ID" value="XM_014777333.1"/>
</dbReference>
<dbReference type="SMR" id="C6TA59"/>
<dbReference type="FunCoup" id="C6TA59">
    <property type="interactions" value="5040"/>
</dbReference>
<dbReference type="STRING" id="3847.C6TA59"/>
<dbReference type="PaxDb" id="3847-GLYMA07G09090.1"/>
<dbReference type="EnsemblPlants" id="KRH48322">
    <property type="protein sequence ID" value="KRH48322"/>
    <property type="gene ID" value="GLYMA_07G082800"/>
</dbReference>
<dbReference type="EnsemblPlants" id="KRH48323">
    <property type="protein sequence ID" value="KRH48323"/>
    <property type="gene ID" value="GLYMA_07G082800"/>
</dbReference>
<dbReference type="EnsemblPlants" id="KRH48324">
    <property type="protein sequence ID" value="KRH48324"/>
    <property type="gene ID" value="GLYMA_07G082800"/>
</dbReference>
<dbReference type="Gramene" id="KRH48322">
    <property type="protein sequence ID" value="KRH48322"/>
    <property type="gene ID" value="GLYMA_07G082800"/>
</dbReference>
<dbReference type="Gramene" id="KRH48323">
    <property type="protein sequence ID" value="KRH48323"/>
    <property type="gene ID" value="GLYMA_07G082800"/>
</dbReference>
<dbReference type="Gramene" id="KRH48324">
    <property type="protein sequence ID" value="KRH48324"/>
    <property type="gene ID" value="GLYMA_07G082800"/>
</dbReference>
<dbReference type="KEGG" id="gmx:100778368"/>
<dbReference type="eggNOG" id="KOG0672">
    <property type="taxonomic scope" value="Eukaryota"/>
</dbReference>
<dbReference type="InParanoid" id="C6TA59"/>
<dbReference type="OrthoDB" id="168599at2759"/>
<dbReference type="UniPathway" id="UPA00241">
    <property type="reaction ID" value="UER00354"/>
</dbReference>
<dbReference type="Proteomes" id="UP000008827">
    <property type="component" value="Chromosome 7"/>
</dbReference>
<dbReference type="ExpressionAtlas" id="C6TA59">
    <property type="expression patterns" value="baseline and differential"/>
</dbReference>
<dbReference type="GO" id="GO:0005634">
    <property type="term" value="C:nucleus"/>
    <property type="evidence" value="ECO:0000314"/>
    <property type="project" value="UniProtKB"/>
</dbReference>
<dbReference type="GO" id="GO:0071513">
    <property type="term" value="C:phosphopantothenoylcysteine decarboxylase complex"/>
    <property type="evidence" value="ECO:0000318"/>
    <property type="project" value="GO_Central"/>
</dbReference>
<dbReference type="GO" id="GO:0005886">
    <property type="term" value="C:plasma membrane"/>
    <property type="evidence" value="ECO:0000314"/>
    <property type="project" value="UniProtKB"/>
</dbReference>
<dbReference type="GO" id="GO:0010181">
    <property type="term" value="F:FMN binding"/>
    <property type="evidence" value="ECO:0000318"/>
    <property type="project" value="GO_Central"/>
</dbReference>
<dbReference type="GO" id="GO:0004633">
    <property type="term" value="F:phosphopantothenoylcysteine decarboxylase activity"/>
    <property type="evidence" value="ECO:0000318"/>
    <property type="project" value="GO_Central"/>
</dbReference>
<dbReference type="GO" id="GO:0015937">
    <property type="term" value="P:coenzyme A biosynthetic process"/>
    <property type="evidence" value="ECO:0000318"/>
    <property type="project" value="GO_Central"/>
</dbReference>
<dbReference type="GO" id="GO:0048573">
    <property type="term" value="P:photoperiodism, flowering"/>
    <property type="evidence" value="ECO:0000270"/>
    <property type="project" value="UniProtKB"/>
</dbReference>
<dbReference type="GO" id="GO:1901002">
    <property type="term" value="P:positive regulation of response to salt stress"/>
    <property type="evidence" value="ECO:0000315"/>
    <property type="project" value="UniProtKB"/>
</dbReference>
<dbReference type="GO" id="GO:0009737">
    <property type="term" value="P:response to abscisic acid"/>
    <property type="evidence" value="ECO:0000270"/>
    <property type="project" value="UniProtKB"/>
</dbReference>
<dbReference type="GO" id="GO:0009409">
    <property type="term" value="P:response to cold"/>
    <property type="evidence" value="ECO:0000270"/>
    <property type="project" value="UniProtKB"/>
</dbReference>
<dbReference type="GO" id="GO:0010226">
    <property type="term" value="P:response to lithium ion"/>
    <property type="evidence" value="ECO:0000315"/>
    <property type="project" value="UniProtKB"/>
</dbReference>
<dbReference type="GO" id="GO:1902074">
    <property type="term" value="P:response to salt"/>
    <property type="evidence" value="ECO:0000270"/>
    <property type="project" value="UniProtKB"/>
</dbReference>
<dbReference type="GO" id="GO:0072708">
    <property type="term" value="P:response to sorbitol"/>
    <property type="evidence" value="ECO:0000315"/>
    <property type="project" value="UniProtKB"/>
</dbReference>
<dbReference type="FunFam" id="3.40.50.1950:FF:000004">
    <property type="entry name" value="Phosphopantothenoylcysteine decarboxylase"/>
    <property type="match status" value="1"/>
</dbReference>
<dbReference type="Gene3D" id="3.40.50.1950">
    <property type="entry name" value="Flavin prenyltransferase-like"/>
    <property type="match status" value="1"/>
</dbReference>
<dbReference type="InterPro" id="IPR036551">
    <property type="entry name" value="Flavin_trans-like"/>
</dbReference>
<dbReference type="InterPro" id="IPR003382">
    <property type="entry name" value="Flavoprotein"/>
</dbReference>
<dbReference type="PANTHER" id="PTHR14359">
    <property type="entry name" value="HOMO-OLIGOMERIC FLAVIN CONTAINING CYS DECARBOXYLASE FAMILY"/>
    <property type="match status" value="1"/>
</dbReference>
<dbReference type="PANTHER" id="PTHR14359:SF6">
    <property type="entry name" value="PHOSPHOPANTOTHENOYLCYSTEINE DECARBOXYLASE"/>
    <property type="match status" value="1"/>
</dbReference>
<dbReference type="Pfam" id="PF02441">
    <property type="entry name" value="Flavoprotein"/>
    <property type="match status" value="1"/>
</dbReference>
<dbReference type="SUPFAM" id="SSF52507">
    <property type="entry name" value="Homo-oligomeric flavin-containing Cys decarboxylases, HFCD"/>
    <property type="match status" value="1"/>
</dbReference>
<reference evidence="8" key="1">
    <citation type="submission" date="2009-08" db="EMBL/GenBank/DDBJ databases">
        <authorList>
            <person name="Cheung F."/>
            <person name="Xiao Y."/>
            <person name="Chan A."/>
            <person name="Moskal W."/>
            <person name="Town C.D."/>
        </authorList>
    </citation>
    <scope>NUCLEOTIDE SEQUENCE [MRNA]</scope>
</reference>
<reference key="2">
    <citation type="journal article" date="2010" name="Nature">
        <title>Genome sequence of the palaeopolyploid soybean.</title>
        <authorList>
            <person name="Schmutz J."/>
            <person name="Cannon S.B."/>
            <person name="Schlueter J."/>
            <person name="Ma J."/>
            <person name="Mitros T."/>
            <person name="Nelson W."/>
            <person name="Hyten D.L."/>
            <person name="Song Q."/>
            <person name="Thelen J.J."/>
            <person name="Cheng J."/>
            <person name="Xu D."/>
            <person name="Hellsten U."/>
            <person name="May G.D."/>
            <person name="Yu Y."/>
            <person name="Sakurai T."/>
            <person name="Umezawa T."/>
            <person name="Bhattacharyya M.K."/>
            <person name="Sandhu D."/>
            <person name="Valliyodan B."/>
            <person name="Lindquist E."/>
            <person name="Peto M."/>
            <person name="Grant D."/>
            <person name="Shu S."/>
            <person name="Goodstein D."/>
            <person name="Barry K."/>
            <person name="Futrell-Griggs M."/>
            <person name="Abernathy B."/>
            <person name="Du J."/>
            <person name="Tian Z."/>
            <person name="Zhu L."/>
            <person name="Gill N."/>
            <person name="Joshi T."/>
            <person name="Libault M."/>
            <person name="Sethuraman A."/>
            <person name="Zhang X.-C."/>
            <person name="Shinozaki K."/>
            <person name="Nguyen H.T."/>
            <person name="Wing R.A."/>
            <person name="Cregan P."/>
            <person name="Specht J."/>
            <person name="Grimwood J."/>
            <person name="Rokhsar D."/>
            <person name="Stacey G."/>
            <person name="Shoemaker R.C."/>
            <person name="Jackson S.A."/>
        </authorList>
    </citation>
    <scope>NUCLEOTIDE SEQUENCE [LARGE SCALE GENOMIC DNA]</scope>
    <source>
        <strain>cv. Williams 82</strain>
        <tissue>Callus</tissue>
    </source>
</reference>
<reference key="3">
    <citation type="journal article" date="2016" name="J. Plant Biol.">
        <title>Over-expression of GmHAL3 modulates salt stresses tolerance in transgenic Arabidopsis.</title>
        <authorList>
            <person name="Guo N."/>
            <person name="Wang M.-X."/>
            <person name="Xue C.-C."/>
            <person name="Xue D."/>
            <person name="Xu J.-Y."/>
            <person name="Wang H.-T."/>
            <person name="Gai J.-Y."/>
            <person name="Xing H."/>
            <person name="Zhao J.-M."/>
        </authorList>
    </citation>
    <scope>FUNCTION</scope>
    <scope>TISSUE SPECIFICITY</scope>
    <scope>DEVELOPMENTAL STAGE</scope>
    <scope>INDUCTION BY SALT; LITHIUM CHLORIDE; SORBITOL; COLD AND ABSCISIC ACID</scope>
    <source>
        <strain>cv. Suxie No.1</strain>
    </source>
</reference>
<reference key="4">
    <citation type="journal article" date="2024" name="Environ. Exp. Bot.">
        <title>The GmCYP2-GmHAL3 module regulates salt tolerance in soybean seedlings.</title>
        <authorList>
            <person name="Gou H."/>
            <person name="Gan J."/>
            <person name="Liu J."/>
            <person name="Deng S."/>
            <person name="Gan L."/>
            <person name="Wang X."/>
            <person name="Zhao J."/>
            <person name="Xing H."/>
            <person name="Guo N."/>
        </authorList>
    </citation>
    <scope>INTERACTION WITH CYP2</scope>
    <scope>SUBCELLULAR LOCATION</scope>
    <source>
        <strain>cv. Suxie No.1</strain>
        <strain>cv. Tianlong No.1</strain>
    </source>
</reference>
<sequence length="214" mass="23401">MAGSEPVSAEGESMAVDAAPRKPRILLAASGSVAAVKFANLCHCFSEWADVRAVSSSGSLHFIDRASMPKDVILYTDEDEWSSWKKLGDSVLHIELRKWADIMVIAPLSANTLGKIAGGLCDNLLTCIVRAWDYSKPFFVAPAMNTLMWNNPFTERHFISIDELGISLIPPVTKRLACGDYGNGAMAEPSTIYSTVRLFYESKAQQGRAVVTLR</sequence>
<name>HAL3B_SOYBN</name>
<evidence type="ECO:0000250" key="1">
    <source>
        <dbReference type="UniProtKB" id="Q9SWE5"/>
    </source>
</evidence>
<evidence type="ECO:0000269" key="2">
    <source ref="3"/>
</evidence>
<evidence type="ECO:0000269" key="3">
    <source ref="4"/>
</evidence>
<evidence type="ECO:0000303" key="4">
    <source ref="3"/>
</evidence>
<evidence type="ECO:0000303" key="5">
    <source ref="4"/>
</evidence>
<evidence type="ECO:0000305" key="6"/>
<evidence type="ECO:0000305" key="7">
    <source ref="4"/>
</evidence>
<evidence type="ECO:0000312" key="8">
    <source>
        <dbReference type="EMBL" id="ACU18711.1"/>
    </source>
</evidence>
<evidence type="ECO:0000312" key="9">
    <source>
        <dbReference type="EMBL" id="KRH48322.1"/>
    </source>
</evidence>
<accession>C6TA59</accession>
<protein>
    <recommendedName>
        <fullName evidence="6">Phosphopantothenoylcysteine decarboxylase HAL3b</fullName>
        <shortName evidence="6">PPCDC</shortName>
        <ecNumber evidence="1">4.1.1.36</ecNumber>
    </recommendedName>
    <alternativeName>
        <fullName evidence="4 5">Halotolerance protein 3b</fullName>
        <shortName evidence="4 5">GmHAL3b</shortName>
    </alternativeName>
</protein>
<feature type="chain" id="PRO_0000462130" description="Phosphopantothenoylcysteine decarboxylase HAL3b">
    <location>
        <begin position="1"/>
        <end position="214"/>
    </location>
</feature>
<feature type="active site" description="Proton donor" evidence="1">
    <location>
        <position position="93"/>
    </location>
</feature>
<feature type="active site" description="Proton donor" evidence="1">
    <location>
        <position position="178"/>
    </location>
</feature>
<feature type="binding site" evidence="1">
    <location>
        <begin position="31"/>
        <end position="33"/>
    </location>
    <ligand>
        <name>FMN</name>
        <dbReference type="ChEBI" id="CHEBI:58210"/>
    </ligand>
</feature>
<feature type="binding site" evidence="1">
    <location>
        <begin position="56"/>
        <end position="58"/>
    </location>
    <ligand>
        <name>FMN</name>
        <dbReference type="ChEBI" id="CHEBI:58210"/>
    </ligand>
</feature>
<feature type="binding site" evidence="1">
    <location>
        <begin position="109"/>
        <end position="112"/>
    </location>
    <ligand>
        <name>FMN</name>
        <dbReference type="ChEBI" id="CHEBI:58210"/>
    </ligand>
</feature>
<feature type="binding site" evidence="1">
    <location>
        <position position="143"/>
    </location>
    <ligand>
        <name>FMN</name>
        <dbReference type="ChEBI" id="CHEBI:58210"/>
    </ligand>
</feature>
<feature type="binding site" evidence="1">
    <location>
        <position position="145"/>
    </location>
    <ligand>
        <name>N-[(R)-4-phosphopantothenoyl]-L-cysteine</name>
        <dbReference type="ChEBI" id="CHEBI:59458"/>
    </ligand>
</feature>
<feature type="binding site" evidence="1">
    <location>
        <position position="175"/>
    </location>
    <ligand>
        <name>N-[(R)-4-phosphopantothenoyl]-L-cysteine</name>
        <dbReference type="ChEBI" id="CHEBI:59458"/>
    </ligand>
</feature>
<feature type="binding site" evidence="1">
    <location>
        <position position="177"/>
    </location>
    <ligand>
        <name>N-[(R)-4-phosphopantothenoyl]-L-cysteine</name>
        <dbReference type="ChEBI" id="CHEBI:59458"/>
    </ligand>
</feature>
<feature type="binding site" evidence="1">
    <location>
        <position position="186"/>
    </location>
    <ligand>
        <name>N-[(R)-4-phosphopantothenoyl]-L-cysteine</name>
        <dbReference type="ChEBI" id="CHEBI:59458"/>
    </ligand>
</feature>
<feature type="site" description="Important for catalytic activity" evidence="1">
    <location>
        <position position="178"/>
    </location>
</feature>
<keyword id="KW-1003">Cell membrane</keyword>
<keyword id="KW-0173">Coenzyme A biosynthesis</keyword>
<keyword id="KW-0210">Decarboxylase</keyword>
<keyword id="KW-0285">Flavoprotein</keyword>
<keyword id="KW-0288">FMN</keyword>
<keyword id="KW-0341">Growth regulation</keyword>
<keyword id="KW-0456">Lyase</keyword>
<keyword id="KW-0472">Membrane</keyword>
<keyword id="KW-0539">Nucleus</keyword>
<keyword id="KW-1185">Reference proteome</keyword>
<keyword id="KW-0346">Stress response</keyword>